<sequence>MTKKLHIKTWGCQMNEYDSSKMADLLASTHGYQLTEIPEEADLLLLNTCSIREKAQEKVFSLLGQWKLLKEKNPELIIGVGGCVASQEGEHLRQRAPCVDVIFGPQTLHRLPEMINHVQGTHSPVVDISFPEIEKFDRLPEPRAEGPTAFVSIMEGCNKYCTFCVVPYTRGEEVSRPSDDILFEIAQLAAQGVREVNLLGQNVNAYRGATYDGDICSFAELLRLVAAIDGIDRVRFTTSHPIEFTDDIIDVYRDTPELVSFLHLPVQSGSDRILTMMKRAHTALEYKAIIRKLRQARPDIQISSDFIIGFPGETQQDFEQTMKLVADVRFDTSYSFIYSPRPGTPAADLPDDVSEEEKKQRLHILQQRITQQAMEISREMVGTVQRILVEGTSRKNVMELAGRTENNRVVNFEGTPEMIGKFVDVEIVDVYASSLRGILLRTEDQMDLRIHESPQSVIARTRKENELGVGLYQP</sequence>
<feature type="chain" id="PRO_0000374654" description="tRNA-2-methylthio-N(6)-dimethylallyladenosine synthase">
    <location>
        <begin position="1"/>
        <end position="474"/>
    </location>
</feature>
<feature type="domain" description="MTTase N-terminal" evidence="1">
    <location>
        <begin position="3"/>
        <end position="120"/>
    </location>
</feature>
<feature type="domain" description="Radical SAM core" evidence="2">
    <location>
        <begin position="143"/>
        <end position="375"/>
    </location>
</feature>
<feature type="domain" description="TRAM" evidence="1">
    <location>
        <begin position="378"/>
        <end position="441"/>
    </location>
</feature>
<feature type="binding site" evidence="1">
    <location>
        <position position="12"/>
    </location>
    <ligand>
        <name>[4Fe-4S] cluster</name>
        <dbReference type="ChEBI" id="CHEBI:49883"/>
        <label>1</label>
    </ligand>
</feature>
<feature type="binding site" evidence="1">
    <location>
        <position position="49"/>
    </location>
    <ligand>
        <name>[4Fe-4S] cluster</name>
        <dbReference type="ChEBI" id="CHEBI:49883"/>
        <label>1</label>
    </ligand>
</feature>
<feature type="binding site" evidence="1">
    <location>
        <position position="83"/>
    </location>
    <ligand>
        <name>[4Fe-4S] cluster</name>
        <dbReference type="ChEBI" id="CHEBI:49883"/>
        <label>1</label>
    </ligand>
</feature>
<feature type="binding site" evidence="1">
    <location>
        <position position="157"/>
    </location>
    <ligand>
        <name>[4Fe-4S] cluster</name>
        <dbReference type="ChEBI" id="CHEBI:49883"/>
        <label>2</label>
        <note>4Fe-4S-S-AdoMet</note>
    </ligand>
</feature>
<feature type="binding site" evidence="1">
    <location>
        <position position="161"/>
    </location>
    <ligand>
        <name>[4Fe-4S] cluster</name>
        <dbReference type="ChEBI" id="CHEBI:49883"/>
        <label>2</label>
        <note>4Fe-4S-S-AdoMet</note>
    </ligand>
</feature>
<feature type="binding site" evidence="1">
    <location>
        <position position="164"/>
    </location>
    <ligand>
        <name>[4Fe-4S] cluster</name>
        <dbReference type="ChEBI" id="CHEBI:49883"/>
        <label>2</label>
        <note>4Fe-4S-S-AdoMet</note>
    </ligand>
</feature>
<protein>
    <recommendedName>
        <fullName evidence="1">tRNA-2-methylthio-N(6)-dimethylallyladenosine synthase</fullName>
        <ecNumber evidence="1">2.8.4.3</ecNumber>
    </recommendedName>
    <alternativeName>
        <fullName evidence="1">(Dimethylallyl)adenosine tRNA methylthiotransferase MiaB</fullName>
    </alternativeName>
    <alternativeName>
        <fullName evidence="1">tRNA-i(6)A37 methylthiotransferase</fullName>
    </alternativeName>
</protein>
<comment type="function">
    <text evidence="1">Catalyzes the methylthiolation of N6-(dimethylallyl)adenosine (i(6)A), leading to the formation of 2-methylthio-N6-(dimethylallyl)adenosine (ms(2)i(6)A) at position 37 in tRNAs that read codons beginning with uridine.</text>
</comment>
<comment type="catalytic activity">
    <reaction evidence="1">
        <text>N(6)-dimethylallyladenosine(37) in tRNA + (sulfur carrier)-SH + AH2 + 2 S-adenosyl-L-methionine = 2-methylsulfanyl-N(6)-dimethylallyladenosine(37) in tRNA + (sulfur carrier)-H + 5'-deoxyadenosine + L-methionine + A + S-adenosyl-L-homocysteine + 2 H(+)</text>
        <dbReference type="Rhea" id="RHEA:37067"/>
        <dbReference type="Rhea" id="RHEA-COMP:10375"/>
        <dbReference type="Rhea" id="RHEA-COMP:10376"/>
        <dbReference type="Rhea" id="RHEA-COMP:14737"/>
        <dbReference type="Rhea" id="RHEA-COMP:14739"/>
        <dbReference type="ChEBI" id="CHEBI:13193"/>
        <dbReference type="ChEBI" id="CHEBI:15378"/>
        <dbReference type="ChEBI" id="CHEBI:17319"/>
        <dbReference type="ChEBI" id="CHEBI:17499"/>
        <dbReference type="ChEBI" id="CHEBI:29917"/>
        <dbReference type="ChEBI" id="CHEBI:57844"/>
        <dbReference type="ChEBI" id="CHEBI:57856"/>
        <dbReference type="ChEBI" id="CHEBI:59789"/>
        <dbReference type="ChEBI" id="CHEBI:64428"/>
        <dbReference type="ChEBI" id="CHEBI:74415"/>
        <dbReference type="ChEBI" id="CHEBI:74417"/>
        <dbReference type="EC" id="2.8.4.3"/>
    </reaction>
</comment>
<comment type="cofactor">
    <cofactor evidence="1">
        <name>[4Fe-4S] cluster</name>
        <dbReference type="ChEBI" id="CHEBI:49883"/>
    </cofactor>
    <text evidence="1">Binds 2 [4Fe-4S] clusters. One cluster is coordinated with 3 cysteines and an exchangeable S-adenosyl-L-methionine.</text>
</comment>
<comment type="subunit">
    <text evidence="1">Monomer.</text>
</comment>
<comment type="subcellular location">
    <subcellularLocation>
        <location evidence="1">Cytoplasm</location>
    </subcellularLocation>
</comment>
<comment type="similarity">
    <text evidence="1">Belongs to the methylthiotransferase family. MiaB subfamily.</text>
</comment>
<name>MIAB_YERE8</name>
<reference key="1">
    <citation type="journal article" date="2006" name="PLoS Genet.">
        <title>The complete genome sequence and comparative genome analysis of the high pathogenicity Yersinia enterocolitica strain 8081.</title>
        <authorList>
            <person name="Thomson N.R."/>
            <person name="Howard S."/>
            <person name="Wren B.W."/>
            <person name="Holden M.T.G."/>
            <person name="Crossman L."/>
            <person name="Challis G.L."/>
            <person name="Churcher C."/>
            <person name="Mungall K."/>
            <person name="Brooks K."/>
            <person name="Chillingworth T."/>
            <person name="Feltwell T."/>
            <person name="Abdellah Z."/>
            <person name="Hauser H."/>
            <person name="Jagels K."/>
            <person name="Maddison M."/>
            <person name="Moule S."/>
            <person name="Sanders M."/>
            <person name="Whitehead S."/>
            <person name="Quail M.A."/>
            <person name="Dougan G."/>
            <person name="Parkhill J."/>
            <person name="Prentice M.B."/>
        </authorList>
    </citation>
    <scope>NUCLEOTIDE SEQUENCE [LARGE SCALE GENOMIC DNA]</scope>
    <source>
        <strain>NCTC 13174 / 8081</strain>
    </source>
</reference>
<proteinExistence type="inferred from homology"/>
<keyword id="KW-0004">4Fe-4S</keyword>
<keyword id="KW-0963">Cytoplasm</keyword>
<keyword id="KW-0408">Iron</keyword>
<keyword id="KW-0411">Iron-sulfur</keyword>
<keyword id="KW-0479">Metal-binding</keyword>
<keyword id="KW-0949">S-adenosyl-L-methionine</keyword>
<keyword id="KW-0808">Transferase</keyword>
<keyword id="KW-0819">tRNA processing</keyword>
<dbReference type="EC" id="2.8.4.3" evidence="1"/>
<dbReference type="EMBL" id="AM286415">
    <property type="protein sequence ID" value="CAL13024.1"/>
    <property type="molecule type" value="Genomic_DNA"/>
</dbReference>
<dbReference type="RefSeq" id="WP_005167929.1">
    <property type="nucleotide sequence ID" value="NC_008800.1"/>
</dbReference>
<dbReference type="RefSeq" id="YP_001007174.1">
    <property type="nucleotide sequence ID" value="NC_008800.1"/>
</dbReference>
<dbReference type="SMR" id="A1JQA3"/>
<dbReference type="KEGG" id="yen:YE2985"/>
<dbReference type="PATRIC" id="fig|393305.7.peg.3179"/>
<dbReference type="eggNOG" id="COG0621">
    <property type="taxonomic scope" value="Bacteria"/>
</dbReference>
<dbReference type="HOGENOM" id="CLU_018697_2_0_6"/>
<dbReference type="OrthoDB" id="9805215at2"/>
<dbReference type="Proteomes" id="UP000000642">
    <property type="component" value="Chromosome"/>
</dbReference>
<dbReference type="GO" id="GO:0005829">
    <property type="term" value="C:cytosol"/>
    <property type="evidence" value="ECO:0007669"/>
    <property type="project" value="TreeGrafter"/>
</dbReference>
<dbReference type="GO" id="GO:0051539">
    <property type="term" value="F:4 iron, 4 sulfur cluster binding"/>
    <property type="evidence" value="ECO:0007669"/>
    <property type="project" value="UniProtKB-UniRule"/>
</dbReference>
<dbReference type="GO" id="GO:0046872">
    <property type="term" value="F:metal ion binding"/>
    <property type="evidence" value="ECO:0007669"/>
    <property type="project" value="UniProtKB-KW"/>
</dbReference>
<dbReference type="GO" id="GO:0035597">
    <property type="term" value="F:N6-isopentenyladenosine methylthiotransferase activity"/>
    <property type="evidence" value="ECO:0007669"/>
    <property type="project" value="TreeGrafter"/>
</dbReference>
<dbReference type="CDD" id="cd01335">
    <property type="entry name" value="Radical_SAM"/>
    <property type="match status" value="1"/>
</dbReference>
<dbReference type="FunFam" id="3.40.50.12160:FF:000001">
    <property type="entry name" value="tRNA-2-methylthio-N(6)-dimethylallyladenosine synthase"/>
    <property type="match status" value="1"/>
</dbReference>
<dbReference type="FunFam" id="3.80.30.20:FF:000001">
    <property type="entry name" value="tRNA-2-methylthio-N(6)-dimethylallyladenosine synthase 2"/>
    <property type="match status" value="1"/>
</dbReference>
<dbReference type="Gene3D" id="3.40.50.12160">
    <property type="entry name" value="Methylthiotransferase, N-terminal domain"/>
    <property type="match status" value="1"/>
</dbReference>
<dbReference type="Gene3D" id="3.80.30.20">
    <property type="entry name" value="tm_1862 like domain"/>
    <property type="match status" value="1"/>
</dbReference>
<dbReference type="HAMAP" id="MF_01864">
    <property type="entry name" value="tRNA_metthiotr_MiaB"/>
    <property type="match status" value="1"/>
</dbReference>
<dbReference type="InterPro" id="IPR006638">
    <property type="entry name" value="Elp3/MiaA/NifB-like_rSAM"/>
</dbReference>
<dbReference type="InterPro" id="IPR005839">
    <property type="entry name" value="Methylthiotransferase"/>
</dbReference>
<dbReference type="InterPro" id="IPR020612">
    <property type="entry name" value="Methylthiotransferase_CS"/>
</dbReference>
<dbReference type="InterPro" id="IPR013848">
    <property type="entry name" value="Methylthiotransferase_N"/>
</dbReference>
<dbReference type="InterPro" id="IPR038135">
    <property type="entry name" value="Methylthiotransferase_N_sf"/>
</dbReference>
<dbReference type="InterPro" id="IPR006463">
    <property type="entry name" value="MiaB_methiolase"/>
</dbReference>
<dbReference type="InterPro" id="IPR007197">
    <property type="entry name" value="rSAM"/>
</dbReference>
<dbReference type="InterPro" id="IPR023404">
    <property type="entry name" value="rSAM_horseshoe"/>
</dbReference>
<dbReference type="InterPro" id="IPR002792">
    <property type="entry name" value="TRAM_dom"/>
</dbReference>
<dbReference type="NCBIfam" id="TIGR01574">
    <property type="entry name" value="miaB-methiolase"/>
    <property type="match status" value="1"/>
</dbReference>
<dbReference type="NCBIfam" id="TIGR00089">
    <property type="entry name" value="MiaB/RimO family radical SAM methylthiotransferase"/>
    <property type="match status" value="1"/>
</dbReference>
<dbReference type="PANTHER" id="PTHR43020">
    <property type="entry name" value="CDK5 REGULATORY SUBUNIT-ASSOCIATED PROTEIN 1"/>
    <property type="match status" value="1"/>
</dbReference>
<dbReference type="PANTHER" id="PTHR43020:SF2">
    <property type="entry name" value="MITOCHONDRIAL TRNA METHYLTHIOTRANSFERASE CDK5RAP1"/>
    <property type="match status" value="1"/>
</dbReference>
<dbReference type="Pfam" id="PF04055">
    <property type="entry name" value="Radical_SAM"/>
    <property type="match status" value="1"/>
</dbReference>
<dbReference type="Pfam" id="PF01938">
    <property type="entry name" value="TRAM"/>
    <property type="match status" value="1"/>
</dbReference>
<dbReference type="Pfam" id="PF00919">
    <property type="entry name" value="UPF0004"/>
    <property type="match status" value="1"/>
</dbReference>
<dbReference type="SFLD" id="SFLDF00273">
    <property type="entry name" value="(dimethylallyl)adenosine_tRNA"/>
    <property type="match status" value="1"/>
</dbReference>
<dbReference type="SFLD" id="SFLDG01082">
    <property type="entry name" value="B12-binding_domain_containing"/>
    <property type="match status" value="1"/>
</dbReference>
<dbReference type="SFLD" id="SFLDS00029">
    <property type="entry name" value="Radical_SAM"/>
    <property type="match status" value="1"/>
</dbReference>
<dbReference type="SMART" id="SM00729">
    <property type="entry name" value="Elp3"/>
    <property type="match status" value="1"/>
</dbReference>
<dbReference type="SUPFAM" id="SSF102114">
    <property type="entry name" value="Radical SAM enzymes"/>
    <property type="match status" value="1"/>
</dbReference>
<dbReference type="PROSITE" id="PS51449">
    <property type="entry name" value="MTTASE_N"/>
    <property type="match status" value="1"/>
</dbReference>
<dbReference type="PROSITE" id="PS01278">
    <property type="entry name" value="MTTASE_RADICAL"/>
    <property type="match status" value="1"/>
</dbReference>
<dbReference type="PROSITE" id="PS51918">
    <property type="entry name" value="RADICAL_SAM"/>
    <property type="match status" value="1"/>
</dbReference>
<dbReference type="PROSITE" id="PS50926">
    <property type="entry name" value="TRAM"/>
    <property type="match status" value="1"/>
</dbReference>
<accession>A1JQA3</accession>
<evidence type="ECO:0000255" key="1">
    <source>
        <dbReference type="HAMAP-Rule" id="MF_01864"/>
    </source>
</evidence>
<evidence type="ECO:0000255" key="2">
    <source>
        <dbReference type="PROSITE-ProRule" id="PRU01266"/>
    </source>
</evidence>
<organism>
    <name type="scientific">Yersinia enterocolitica serotype O:8 / biotype 1B (strain NCTC 13174 / 8081)</name>
    <dbReference type="NCBI Taxonomy" id="393305"/>
    <lineage>
        <taxon>Bacteria</taxon>
        <taxon>Pseudomonadati</taxon>
        <taxon>Pseudomonadota</taxon>
        <taxon>Gammaproteobacteria</taxon>
        <taxon>Enterobacterales</taxon>
        <taxon>Yersiniaceae</taxon>
        <taxon>Yersinia</taxon>
    </lineage>
</organism>
<gene>
    <name evidence="1" type="primary">miaB</name>
    <name type="ordered locus">YE2985</name>
</gene>